<keyword id="KW-0067">ATP-binding</keyword>
<keyword id="KW-0963">Cytoplasm</keyword>
<keyword id="KW-0460">Magnesium</keyword>
<keyword id="KW-0479">Metal-binding</keyword>
<keyword id="KW-0547">Nucleotide-binding</keyword>
<keyword id="KW-0554">One-carbon metabolism</keyword>
<keyword id="KW-0630">Potassium</keyword>
<keyword id="KW-1185">Reference proteome</keyword>
<keyword id="KW-0808">Transferase</keyword>
<dbReference type="EC" id="2.5.1.6" evidence="1"/>
<dbReference type="EMBL" id="BX640420">
    <property type="protein sequence ID" value="CAE43340.1"/>
    <property type="molecule type" value="Genomic_DNA"/>
</dbReference>
<dbReference type="RefSeq" id="NP_881642.1">
    <property type="nucleotide sequence ID" value="NC_002929.2"/>
</dbReference>
<dbReference type="RefSeq" id="WP_010925730.1">
    <property type="nucleotide sequence ID" value="NZ_CP039022.1"/>
</dbReference>
<dbReference type="SMR" id="Q7VUL5"/>
<dbReference type="STRING" id="257313.BP3071"/>
<dbReference type="PaxDb" id="257313-BP3071"/>
<dbReference type="GeneID" id="93206423"/>
<dbReference type="KEGG" id="bpe:BP3071"/>
<dbReference type="PATRIC" id="fig|257313.5.peg.3319"/>
<dbReference type="eggNOG" id="COG0192">
    <property type="taxonomic scope" value="Bacteria"/>
</dbReference>
<dbReference type="HOGENOM" id="CLU_041802_1_1_4"/>
<dbReference type="UniPathway" id="UPA00315">
    <property type="reaction ID" value="UER00080"/>
</dbReference>
<dbReference type="Proteomes" id="UP000002676">
    <property type="component" value="Chromosome"/>
</dbReference>
<dbReference type="GO" id="GO:0005737">
    <property type="term" value="C:cytoplasm"/>
    <property type="evidence" value="ECO:0007669"/>
    <property type="project" value="UniProtKB-SubCell"/>
</dbReference>
<dbReference type="GO" id="GO:0005524">
    <property type="term" value="F:ATP binding"/>
    <property type="evidence" value="ECO:0007669"/>
    <property type="project" value="UniProtKB-UniRule"/>
</dbReference>
<dbReference type="GO" id="GO:0000287">
    <property type="term" value="F:magnesium ion binding"/>
    <property type="evidence" value="ECO:0007669"/>
    <property type="project" value="UniProtKB-UniRule"/>
</dbReference>
<dbReference type="GO" id="GO:0004478">
    <property type="term" value="F:methionine adenosyltransferase activity"/>
    <property type="evidence" value="ECO:0007669"/>
    <property type="project" value="UniProtKB-UniRule"/>
</dbReference>
<dbReference type="GO" id="GO:0006730">
    <property type="term" value="P:one-carbon metabolic process"/>
    <property type="evidence" value="ECO:0007669"/>
    <property type="project" value="UniProtKB-KW"/>
</dbReference>
<dbReference type="GO" id="GO:0006556">
    <property type="term" value="P:S-adenosylmethionine biosynthetic process"/>
    <property type="evidence" value="ECO:0007669"/>
    <property type="project" value="UniProtKB-UniRule"/>
</dbReference>
<dbReference type="CDD" id="cd18079">
    <property type="entry name" value="S-AdoMet_synt"/>
    <property type="match status" value="1"/>
</dbReference>
<dbReference type="FunFam" id="3.30.300.10:FF:000003">
    <property type="entry name" value="S-adenosylmethionine synthase"/>
    <property type="match status" value="1"/>
</dbReference>
<dbReference type="FunFam" id="3.30.300.10:FF:000004">
    <property type="entry name" value="S-adenosylmethionine synthase"/>
    <property type="match status" value="1"/>
</dbReference>
<dbReference type="Gene3D" id="3.30.300.10">
    <property type="match status" value="3"/>
</dbReference>
<dbReference type="HAMAP" id="MF_00086">
    <property type="entry name" value="S_AdoMet_synth1"/>
    <property type="match status" value="1"/>
</dbReference>
<dbReference type="InterPro" id="IPR022631">
    <property type="entry name" value="ADOMET_SYNTHASE_CS"/>
</dbReference>
<dbReference type="InterPro" id="IPR022630">
    <property type="entry name" value="S-AdoMet_synt_C"/>
</dbReference>
<dbReference type="InterPro" id="IPR022629">
    <property type="entry name" value="S-AdoMet_synt_central"/>
</dbReference>
<dbReference type="InterPro" id="IPR022628">
    <property type="entry name" value="S-AdoMet_synt_N"/>
</dbReference>
<dbReference type="InterPro" id="IPR002133">
    <property type="entry name" value="S-AdoMet_synthetase"/>
</dbReference>
<dbReference type="InterPro" id="IPR022636">
    <property type="entry name" value="S-AdoMet_synthetase_sfam"/>
</dbReference>
<dbReference type="NCBIfam" id="TIGR01034">
    <property type="entry name" value="metK"/>
    <property type="match status" value="1"/>
</dbReference>
<dbReference type="PANTHER" id="PTHR11964">
    <property type="entry name" value="S-ADENOSYLMETHIONINE SYNTHETASE"/>
    <property type="match status" value="1"/>
</dbReference>
<dbReference type="Pfam" id="PF02773">
    <property type="entry name" value="S-AdoMet_synt_C"/>
    <property type="match status" value="1"/>
</dbReference>
<dbReference type="Pfam" id="PF02772">
    <property type="entry name" value="S-AdoMet_synt_M"/>
    <property type="match status" value="1"/>
</dbReference>
<dbReference type="Pfam" id="PF00438">
    <property type="entry name" value="S-AdoMet_synt_N"/>
    <property type="match status" value="1"/>
</dbReference>
<dbReference type="PIRSF" id="PIRSF000497">
    <property type="entry name" value="MAT"/>
    <property type="match status" value="1"/>
</dbReference>
<dbReference type="SUPFAM" id="SSF55973">
    <property type="entry name" value="S-adenosylmethionine synthetase"/>
    <property type="match status" value="3"/>
</dbReference>
<dbReference type="PROSITE" id="PS00376">
    <property type="entry name" value="ADOMET_SYNTHASE_1"/>
    <property type="match status" value="1"/>
</dbReference>
<dbReference type="PROSITE" id="PS00377">
    <property type="entry name" value="ADOMET_SYNTHASE_2"/>
    <property type="match status" value="1"/>
</dbReference>
<name>METK_BORPE</name>
<evidence type="ECO:0000255" key="1">
    <source>
        <dbReference type="HAMAP-Rule" id="MF_00086"/>
    </source>
</evidence>
<organism>
    <name type="scientific">Bordetella pertussis (strain Tohama I / ATCC BAA-589 / NCTC 13251)</name>
    <dbReference type="NCBI Taxonomy" id="257313"/>
    <lineage>
        <taxon>Bacteria</taxon>
        <taxon>Pseudomonadati</taxon>
        <taxon>Pseudomonadota</taxon>
        <taxon>Betaproteobacteria</taxon>
        <taxon>Burkholderiales</taxon>
        <taxon>Alcaligenaceae</taxon>
        <taxon>Bordetella</taxon>
    </lineage>
</organism>
<protein>
    <recommendedName>
        <fullName evidence="1">S-adenosylmethionine synthase</fullName>
        <shortName evidence="1">AdoMet synthase</shortName>
        <ecNumber evidence="1">2.5.1.6</ecNumber>
    </recommendedName>
    <alternativeName>
        <fullName evidence="1">MAT</fullName>
    </alternativeName>
    <alternativeName>
        <fullName evidence="1">Methionine adenosyltransferase</fullName>
    </alternativeName>
</protein>
<feature type="chain" id="PRO_0000174500" description="S-adenosylmethionine synthase">
    <location>
        <begin position="1"/>
        <end position="387"/>
    </location>
</feature>
<feature type="region of interest" description="Flexible loop" evidence="1">
    <location>
        <begin position="101"/>
        <end position="111"/>
    </location>
</feature>
<feature type="binding site" description="in other chain" evidence="1">
    <location>
        <position position="17"/>
    </location>
    <ligand>
        <name>ATP</name>
        <dbReference type="ChEBI" id="CHEBI:30616"/>
        <note>ligand shared between two neighboring subunits</note>
    </ligand>
</feature>
<feature type="binding site" evidence="1">
    <location>
        <position position="19"/>
    </location>
    <ligand>
        <name>Mg(2+)</name>
        <dbReference type="ChEBI" id="CHEBI:18420"/>
    </ligand>
</feature>
<feature type="binding site" evidence="1">
    <location>
        <position position="45"/>
    </location>
    <ligand>
        <name>K(+)</name>
        <dbReference type="ChEBI" id="CHEBI:29103"/>
    </ligand>
</feature>
<feature type="binding site" description="in other chain" evidence="1">
    <location>
        <position position="58"/>
    </location>
    <ligand>
        <name>L-methionine</name>
        <dbReference type="ChEBI" id="CHEBI:57844"/>
        <note>ligand shared between two neighboring subunits</note>
    </ligand>
</feature>
<feature type="binding site" description="in other chain" evidence="1">
    <location>
        <position position="101"/>
    </location>
    <ligand>
        <name>L-methionine</name>
        <dbReference type="ChEBI" id="CHEBI:57844"/>
        <note>ligand shared between two neighboring subunits</note>
    </ligand>
</feature>
<feature type="binding site" description="in other chain" evidence="1">
    <location>
        <begin position="168"/>
        <end position="170"/>
    </location>
    <ligand>
        <name>ATP</name>
        <dbReference type="ChEBI" id="CHEBI:30616"/>
        <note>ligand shared between two neighboring subunits</note>
    </ligand>
</feature>
<feature type="binding site" description="in other chain" evidence="1">
    <location>
        <begin position="234"/>
        <end position="235"/>
    </location>
    <ligand>
        <name>ATP</name>
        <dbReference type="ChEBI" id="CHEBI:30616"/>
        <note>ligand shared between two neighboring subunits</note>
    </ligand>
</feature>
<feature type="binding site" evidence="1">
    <location>
        <position position="243"/>
    </location>
    <ligand>
        <name>ATP</name>
        <dbReference type="ChEBI" id="CHEBI:30616"/>
        <note>ligand shared between two neighboring subunits</note>
    </ligand>
</feature>
<feature type="binding site" evidence="1">
    <location>
        <position position="243"/>
    </location>
    <ligand>
        <name>L-methionine</name>
        <dbReference type="ChEBI" id="CHEBI:57844"/>
        <note>ligand shared between two neighboring subunits</note>
    </ligand>
</feature>
<feature type="binding site" description="in other chain" evidence="1">
    <location>
        <begin position="249"/>
        <end position="250"/>
    </location>
    <ligand>
        <name>ATP</name>
        <dbReference type="ChEBI" id="CHEBI:30616"/>
        <note>ligand shared between two neighboring subunits</note>
    </ligand>
</feature>
<feature type="binding site" evidence="1">
    <location>
        <position position="266"/>
    </location>
    <ligand>
        <name>ATP</name>
        <dbReference type="ChEBI" id="CHEBI:30616"/>
        <note>ligand shared between two neighboring subunits</note>
    </ligand>
</feature>
<feature type="binding site" evidence="1">
    <location>
        <position position="270"/>
    </location>
    <ligand>
        <name>ATP</name>
        <dbReference type="ChEBI" id="CHEBI:30616"/>
        <note>ligand shared between two neighboring subunits</note>
    </ligand>
</feature>
<feature type="binding site" description="in other chain" evidence="1">
    <location>
        <position position="274"/>
    </location>
    <ligand>
        <name>L-methionine</name>
        <dbReference type="ChEBI" id="CHEBI:57844"/>
        <note>ligand shared between two neighboring subunits</note>
    </ligand>
</feature>
<reference key="1">
    <citation type="journal article" date="2003" name="Nat. Genet.">
        <title>Comparative analysis of the genome sequences of Bordetella pertussis, Bordetella parapertussis and Bordetella bronchiseptica.</title>
        <authorList>
            <person name="Parkhill J."/>
            <person name="Sebaihia M."/>
            <person name="Preston A."/>
            <person name="Murphy L.D."/>
            <person name="Thomson N.R."/>
            <person name="Harris D.E."/>
            <person name="Holden M.T.G."/>
            <person name="Churcher C.M."/>
            <person name="Bentley S.D."/>
            <person name="Mungall K.L."/>
            <person name="Cerdeno-Tarraga A.-M."/>
            <person name="Temple L."/>
            <person name="James K.D."/>
            <person name="Harris B."/>
            <person name="Quail M.A."/>
            <person name="Achtman M."/>
            <person name="Atkin R."/>
            <person name="Baker S."/>
            <person name="Basham D."/>
            <person name="Bason N."/>
            <person name="Cherevach I."/>
            <person name="Chillingworth T."/>
            <person name="Collins M."/>
            <person name="Cronin A."/>
            <person name="Davis P."/>
            <person name="Doggett J."/>
            <person name="Feltwell T."/>
            <person name="Goble A."/>
            <person name="Hamlin N."/>
            <person name="Hauser H."/>
            <person name="Holroyd S."/>
            <person name="Jagels K."/>
            <person name="Leather S."/>
            <person name="Moule S."/>
            <person name="Norberczak H."/>
            <person name="O'Neil S."/>
            <person name="Ormond D."/>
            <person name="Price C."/>
            <person name="Rabbinowitsch E."/>
            <person name="Rutter S."/>
            <person name="Sanders M."/>
            <person name="Saunders D."/>
            <person name="Seeger K."/>
            <person name="Sharp S."/>
            <person name="Simmonds M."/>
            <person name="Skelton J."/>
            <person name="Squares R."/>
            <person name="Squares S."/>
            <person name="Stevens K."/>
            <person name="Unwin L."/>
            <person name="Whitehead S."/>
            <person name="Barrell B.G."/>
            <person name="Maskell D.J."/>
        </authorList>
    </citation>
    <scope>NUCLEOTIDE SEQUENCE [LARGE SCALE GENOMIC DNA]</scope>
    <source>
        <strain>Tohama I / ATCC BAA-589 / NCTC 13251</strain>
    </source>
</reference>
<sequence length="387" mass="42002">MANNDFLFTSESVSEGHPDKVADQISDAILDAIFTQDPNARVAAETLCNTGLVVLAGEITTTANVDYIQVARDTIRHIGYDNTEYGIDYKGCAVLVAYDKQSPDIAQGVDRSSEDYLNQGAGDQGLMFGYACDETPDLMPAPIWYAHRLVQRQSELRKDGRLPWLRPDAKSQVTFRYVDGRPAEVDTVVLSTQHSPEISQASIREAVIEDIIKPSFPEGLITPKTKFLVNPTGRFVIGGPQGDCGLTGRKIIVDTYGGACPHGGGAFSGKDPSKVDRSAAYAARYVAKNVVAAGLARQCQVQVSYAIGVAEPINITVYTEGTGVIPDEQIAKLVREHFDLRPKGIVNMLDLLRPIYTKTAAYGHFGRSEPEFSWEATDKAAALKQGA</sequence>
<accession>Q7VUL5</accession>
<gene>
    <name evidence="1" type="primary">metK</name>
    <name type="ordered locus">BP3071</name>
</gene>
<comment type="function">
    <text evidence="1">Catalyzes the formation of S-adenosylmethionine (AdoMet) from methionine and ATP. The overall synthetic reaction is composed of two sequential steps, AdoMet formation and the subsequent tripolyphosphate hydrolysis which occurs prior to release of AdoMet from the enzyme.</text>
</comment>
<comment type="catalytic activity">
    <reaction evidence="1">
        <text>L-methionine + ATP + H2O = S-adenosyl-L-methionine + phosphate + diphosphate</text>
        <dbReference type="Rhea" id="RHEA:21080"/>
        <dbReference type="ChEBI" id="CHEBI:15377"/>
        <dbReference type="ChEBI" id="CHEBI:30616"/>
        <dbReference type="ChEBI" id="CHEBI:33019"/>
        <dbReference type="ChEBI" id="CHEBI:43474"/>
        <dbReference type="ChEBI" id="CHEBI:57844"/>
        <dbReference type="ChEBI" id="CHEBI:59789"/>
        <dbReference type="EC" id="2.5.1.6"/>
    </reaction>
</comment>
<comment type="cofactor">
    <cofactor evidence="1">
        <name>Mg(2+)</name>
        <dbReference type="ChEBI" id="CHEBI:18420"/>
    </cofactor>
    <text evidence="1">Binds 2 divalent ions per subunit.</text>
</comment>
<comment type="cofactor">
    <cofactor evidence="1">
        <name>K(+)</name>
        <dbReference type="ChEBI" id="CHEBI:29103"/>
    </cofactor>
    <text evidence="1">Binds 1 potassium ion per subunit.</text>
</comment>
<comment type="pathway">
    <text evidence="1">Amino-acid biosynthesis; S-adenosyl-L-methionine biosynthesis; S-adenosyl-L-methionine from L-methionine: step 1/1.</text>
</comment>
<comment type="subunit">
    <text evidence="1">Homotetramer; dimer of dimers.</text>
</comment>
<comment type="subcellular location">
    <subcellularLocation>
        <location evidence="1">Cytoplasm</location>
    </subcellularLocation>
</comment>
<comment type="similarity">
    <text evidence="1">Belongs to the AdoMet synthase family.</text>
</comment>
<proteinExistence type="inferred from homology"/>